<protein>
    <recommendedName>
        <fullName evidence="1">Galactose-6-phosphate isomerase subunit LacA</fullName>
        <ecNumber evidence="1">5.3.1.26</ecNumber>
    </recommendedName>
</protein>
<organism>
    <name type="scientific">Staphylococcus epidermidis (strain ATCC 35984 / DSM 28319 / BCRC 17069 / CCUG 31568 / BM 3577 / RP62A)</name>
    <dbReference type="NCBI Taxonomy" id="176279"/>
    <lineage>
        <taxon>Bacteria</taxon>
        <taxon>Bacillati</taxon>
        <taxon>Bacillota</taxon>
        <taxon>Bacilli</taxon>
        <taxon>Bacillales</taxon>
        <taxon>Staphylococcaceae</taxon>
        <taxon>Staphylococcus</taxon>
    </lineage>
</organism>
<dbReference type="EC" id="5.3.1.26" evidence="1"/>
<dbReference type="EMBL" id="CP000029">
    <property type="protein sequence ID" value="AAW55180.1"/>
    <property type="molecule type" value="Genomic_DNA"/>
</dbReference>
<dbReference type="RefSeq" id="WP_001829760.1">
    <property type="nucleotide sequence ID" value="NC_002976.3"/>
</dbReference>
<dbReference type="SMR" id="Q5HM35"/>
<dbReference type="STRING" id="176279.SERP1795"/>
<dbReference type="GeneID" id="50018109"/>
<dbReference type="KEGG" id="ser:SERP1795"/>
<dbReference type="eggNOG" id="COG0698">
    <property type="taxonomic scope" value="Bacteria"/>
</dbReference>
<dbReference type="HOGENOM" id="CLU_091396_4_2_9"/>
<dbReference type="UniPathway" id="UPA00702">
    <property type="reaction ID" value="UER00714"/>
</dbReference>
<dbReference type="Proteomes" id="UP000000531">
    <property type="component" value="Chromosome"/>
</dbReference>
<dbReference type="GO" id="GO:0050044">
    <property type="term" value="F:galactose-6-phosphate isomerase activity"/>
    <property type="evidence" value="ECO:0007669"/>
    <property type="project" value="UniProtKB-UniRule"/>
</dbReference>
<dbReference type="GO" id="GO:0004751">
    <property type="term" value="F:ribose-5-phosphate isomerase activity"/>
    <property type="evidence" value="ECO:0007669"/>
    <property type="project" value="TreeGrafter"/>
</dbReference>
<dbReference type="GO" id="GO:0019316">
    <property type="term" value="P:D-allose catabolic process"/>
    <property type="evidence" value="ECO:0007669"/>
    <property type="project" value="TreeGrafter"/>
</dbReference>
<dbReference type="GO" id="GO:0019388">
    <property type="term" value="P:galactose catabolic process"/>
    <property type="evidence" value="ECO:0007669"/>
    <property type="project" value="UniProtKB-UniPathway"/>
</dbReference>
<dbReference type="GO" id="GO:0019512">
    <property type="term" value="P:lactose catabolic process via tagatose-6-phosphate"/>
    <property type="evidence" value="ECO:0007669"/>
    <property type="project" value="UniProtKB-UniRule"/>
</dbReference>
<dbReference type="GO" id="GO:0009052">
    <property type="term" value="P:pentose-phosphate shunt, non-oxidative branch"/>
    <property type="evidence" value="ECO:0007669"/>
    <property type="project" value="TreeGrafter"/>
</dbReference>
<dbReference type="Gene3D" id="3.40.1400.10">
    <property type="entry name" value="Sugar-phosphate isomerase, RpiB/LacA/LacB"/>
    <property type="match status" value="1"/>
</dbReference>
<dbReference type="HAMAP" id="MF_01555">
    <property type="entry name" value="LacA"/>
    <property type="match status" value="1"/>
</dbReference>
<dbReference type="InterPro" id="IPR004783">
    <property type="entry name" value="LacA"/>
</dbReference>
<dbReference type="InterPro" id="IPR003500">
    <property type="entry name" value="RpiB_LacA_LacB"/>
</dbReference>
<dbReference type="InterPro" id="IPR036569">
    <property type="entry name" value="RpiB_LacA_LacB_sf"/>
</dbReference>
<dbReference type="NCBIfam" id="TIGR01118">
    <property type="entry name" value="lacA"/>
    <property type="match status" value="1"/>
</dbReference>
<dbReference type="NCBIfam" id="NF006380">
    <property type="entry name" value="PRK08621.1"/>
    <property type="match status" value="1"/>
</dbReference>
<dbReference type="NCBIfam" id="TIGR00689">
    <property type="entry name" value="rpiB_lacA_lacB"/>
    <property type="match status" value="1"/>
</dbReference>
<dbReference type="PANTHER" id="PTHR30345:SF5">
    <property type="entry name" value="GALACTOSE-6-PHOSPHATE ISOMERASE SUBUNIT LACA"/>
    <property type="match status" value="1"/>
</dbReference>
<dbReference type="PANTHER" id="PTHR30345">
    <property type="entry name" value="RIBOSE-5-PHOSPHATE ISOMERASE B"/>
    <property type="match status" value="1"/>
</dbReference>
<dbReference type="Pfam" id="PF02502">
    <property type="entry name" value="LacAB_rpiB"/>
    <property type="match status" value="1"/>
</dbReference>
<dbReference type="PIRSF" id="PIRSF005384">
    <property type="entry name" value="RpiB_LacA_B"/>
    <property type="match status" value="1"/>
</dbReference>
<dbReference type="SUPFAM" id="SSF89623">
    <property type="entry name" value="Ribose/Galactose isomerase RpiB/AlsB"/>
    <property type="match status" value="1"/>
</dbReference>
<name>LACA_STAEQ</name>
<evidence type="ECO:0000255" key="1">
    <source>
        <dbReference type="HAMAP-Rule" id="MF_01555"/>
    </source>
</evidence>
<comment type="catalytic activity">
    <reaction evidence="1">
        <text>aldehydo-D-galactose 6-phosphate = keto-D-tagatose 6-phosphate</text>
        <dbReference type="Rhea" id="RHEA:13033"/>
        <dbReference type="ChEBI" id="CHEBI:58255"/>
        <dbReference type="ChEBI" id="CHEBI:134283"/>
        <dbReference type="EC" id="5.3.1.26"/>
    </reaction>
</comment>
<comment type="pathway">
    <text evidence="1">Carbohydrate metabolism; D-galactose 6-phosphate degradation; D-tagatose 6-phosphate from D-galactose 6-phosphate: step 1/1.</text>
</comment>
<comment type="subunit">
    <text evidence="1">Heteromultimeric protein consisting of LacA and LacB.</text>
</comment>
<comment type="similarity">
    <text evidence="1">Belongs to the LacAB/RpiB family.</text>
</comment>
<keyword id="KW-0413">Isomerase</keyword>
<keyword id="KW-0423">Lactose metabolism</keyword>
<keyword id="KW-1185">Reference proteome</keyword>
<accession>Q5HM35</accession>
<sequence>MTIIIGSDVDGKRLKELIKDYLEDNDYDVLDVTEGKDLDFVDSTVSVAKEVQKSDDNLGIAIDAYGAGSFIVATKIKGMIAAEVSDERSAYMTRSHNNARMITMGAEIVGDTLAKNVAKEFVNGHYDGGRHQIRVDMLNKMC</sequence>
<reference key="1">
    <citation type="journal article" date="2005" name="J. Bacteriol.">
        <title>Insights on evolution of virulence and resistance from the complete genome analysis of an early methicillin-resistant Staphylococcus aureus strain and a biofilm-producing methicillin-resistant Staphylococcus epidermidis strain.</title>
        <authorList>
            <person name="Gill S.R."/>
            <person name="Fouts D.E."/>
            <person name="Archer G.L."/>
            <person name="Mongodin E.F."/>
            <person name="DeBoy R.T."/>
            <person name="Ravel J."/>
            <person name="Paulsen I.T."/>
            <person name="Kolonay J.F."/>
            <person name="Brinkac L.M."/>
            <person name="Beanan M.J."/>
            <person name="Dodson R.J."/>
            <person name="Daugherty S.C."/>
            <person name="Madupu R."/>
            <person name="Angiuoli S.V."/>
            <person name="Durkin A.S."/>
            <person name="Haft D.H."/>
            <person name="Vamathevan J.J."/>
            <person name="Khouri H."/>
            <person name="Utterback T.R."/>
            <person name="Lee C."/>
            <person name="Dimitrov G."/>
            <person name="Jiang L."/>
            <person name="Qin H."/>
            <person name="Weidman J."/>
            <person name="Tran K."/>
            <person name="Kang K.H."/>
            <person name="Hance I.R."/>
            <person name="Nelson K.E."/>
            <person name="Fraser C.M."/>
        </authorList>
    </citation>
    <scope>NUCLEOTIDE SEQUENCE [LARGE SCALE GENOMIC DNA]</scope>
    <source>
        <strain>ATCC 35984 / DSM 28319 / BCRC 17069 / CCUG 31568 / BM 3577 / RP62A</strain>
    </source>
</reference>
<proteinExistence type="inferred from homology"/>
<feature type="chain" id="PRO_0000208113" description="Galactose-6-phosphate isomerase subunit LacA">
    <location>
        <begin position="1"/>
        <end position="142"/>
    </location>
</feature>
<gene>
    <name evidence="1" type="primary">lacA</name>
    <name type="ordered locus">SERP1795</name>
</gene>